<proteinExistence type="inferred from homology"/>
<sequence length="356" mass="41400">MDSTYIGSYGRLRVYQTEFFSRQQIDQMLSMTDPKDVSAFLYNGPYREDYDSLSAVFKDPDLTEMAINRHMVRNNRLVLFAIPPLAKNAVVAYLSKWDIENIKTVISAKFLGHGIREAEPFLVSFRDIPLGIMSGTLTNEDYRNMINLPNIEAILNYLARFGYGTYMMQFLEDYRKTGDISPMLYSLDRYYYMNLLSALKYYRGDEAPVLNYVRSDIDRQNIVTMLKGKVLKIPFERMSSGIIDGGNIGVNRLREIYSSQDAVSVADALKQYYDLEEPKKKYMETGDLYHFDIAIRNIIARRFLDTMSMLPLSLDSLFYFILRSEIERHNLRTIYLSKVNGMPREITESLLITEMM</sequence>
<gene>
    <name evidence="1" type="primary">atpC</name>
    <name type="ordered locus">Ta0002</name>
</gene>
<evidence type="ECO:0000255" key="1">
    <source>
        <dbReference type="HAMAP-Rule" id="MF_00314"/>
    </source>
</evidence>
<reference key="1">
    <citation type="journal article" date="2000" name="Nature">
        <title>The genome sequence of the thermoacidophilic scavenger Thermoplasma acidophilum.</title>
        <authorList>
            <person name="Ruepp A."/>
            <person name="Graml W."/>
            <person name="Santos-Martinez M.-L."/>
            <person name="Koretke K.K."/>
            <person name="Volker C."/>
            <person name="Mewes H.-W."/>
            <person name="Frishman D."/>
            <person name="Stocker S."/>
            <person name="Lupas A.N."/>
            <person name="Baumeister W."/>
        </authorList>
    </citation>
    <scope>NUCLEOTIDE SEQUENCE [LARGE SCALE GENOMIC DNA]</scope>
    <source>
        <strain>ATCC 25905 / DSM 1728 / JCM 9062 / NBRC 15155 / AMRC-C165</strain>
    </source>
</reference>
<comment type="function">
    <text evidence="1">Component of the A-type ATP synthase that produces ATP from ADP in the presence of a proton gradient across the membrane.</text>
</comment>
<comment type="subunit">
    <text evidence="1">Has multiple subunits with at least A(3), B(3), C, D, E, F, H, I and proteolipid K(x).</text>
</comment>
<comment type="subcellular location">
    <subcellularLocation>
        <location evidence="1">Cell membrane</location>
        <topology evidence="1">Peripheral membrane protein</topology>
    </subcellularLocation>
</comment>
<comment type="similarity">
    <text evidence="1">Belongs to the V-ATPase V0D/AC39 subunit family.</text>
</comment>
<dbReference type="EMBL" id="AL445063">
    <property type="protein sequence ID" value="CAC11151.1"/>
    <property type="molecule type" value="Genomic_DNA"/>
</dbReference>
<dbReference type="RefSeq" id="WP_010900429.1">
    <property type="nucleotide sequence ID" value="NC_002578.1"/>
</dbReference>
<dbReference type="SMR" id="Q9HM67"/>
<dbReference type="STRING" id="273075.gene:9571217"/>
<dbReference type="PaxDb" id="273075-Ta0002"/>
<dbReference type="EnsemblBacteria" id="CAC11151">
    <property type="protein sequence ID" value="CAC11151"/>
    <property type="gene ID" value="CAC11151"/>
</dbReference>
<dbReference type="KEGG" id="tac:Ta0002"/>
<dbReference type="eggNOG" id="arCOG02459">
    <property type="taxonomic scope" value="Archaea"/>
</dbReference>
<dbReference type="HOGENOM" id="CLU_777607_0_0_2"/>
<dbReference type="InParanoid" id="Q9HM67"/>
<dbReference type="OrthoDB" id="4272at2157"/>
<dbReference type="Proteomes" id="UP000001024">
    <property type="component" value="Chromosome"/>
</dbReference>
<dbReference type="GO" id="GO:0005886">
    <property type="term" value="C:plasma membrane"/>
    <property type="evidence" value="ECO:0007669"/>
    <property type="project" value="UniProtKB-SubCell"/>
</dbReference>
<dbReference type="GO" id="GO:0033179">
    <property type="term" value="C:proton-transporting V-type ATPase, V0 domain"/>
    <property type="evidence" value="ECO:0007669"/>
    <property type="project" value="InterPro"/>
</dbReference>
<dbReference type="GO" id="GO:0005524">
    <property type="term" value="F:ATP binding"/>
    <property type="evidence" value="ECO:0007669"/>
    <property type="project" value="UniProtKB-UniRule"/>
</dbReference>
<dbReference type="GO" id="GO:0046933">
    <property type="term" value="F:proton-transporting ATP synthase activity, rotational mechanism"/>
    <property type="evidence" value="ECO:0007669"/>
    <property type="project" value="UniProtKB-UniRule"/>
</dbReference>
<dbReference type="GO" id="GO:0046961">
    <property type="term" value="F:proton-transporting ATPase activity, rotational mechanism"/>
    <property type="evidence" value="ECO:0007669"/>
    <property type="project" value="InterPro"/>
</dbReference>
<dbReference type="GO" id="GO:0042777">
    <property type="term" value="P:proton motive force-driven plasma membrane ATP synthesis"/>
    <property type="evidence" value="ECO:0007669"/>
    <property type="project" value="UniProtKB-UniRule"/>
</dbReference>
<dbReference type="Gene3D" id="1.10.132.50">
    <property type="entry name" value="ATP synthase (C/AC39) subunit, domain 3"/>
    <property type="match status" value="1"/>
</dbReference>
<dbReference type="Gene3D" id="1.20.1690.10">
    <property type="entry name" value="V-type ATP synthase subunit C domain"/>
    <property type="match status" value="2"/>
</dbReference>
<dbReference type="HAMAP" id="MF_00314">
    <property type="entry name" value="ATP_synth_C_arch"/>
    <property type="match status" value="1"/>
</dbReference>
<dbReference type="InterPro" id="IPR036079">
    <property type="entry name" value="ATPase_csu/dsu_sf"/>
</dbReference>
<dbReference type="InterPro" id="IPR014272">
    <property type="entry name" value="ATPase_V0-cplx_csu"/>
</dbReference>
<dbReference type="InterPro" id="IPR002843">
    <property type="entry name" value="ATPase_V0-cplx_csu/dsu"/>
</dbReference>
<dbReference type="InterPro" id="IPR050873">
    <property type="entry name" value="V-ATPase_V0D/AC39_subunit"/>
</dbReference>
<dbReference type="InterPro" id="IPR035067">
    <property type="entry name" value="V-type_ATPase_csu/dsu"/>
</dbReference>
<dbReference type="InterPro" id="IPR044911">
    <property type="entry name" value="V-type_ATPase_csu/dsu_dom_3"/>
</dbReference>
<dbReference type="NCBIfam" id="NF002266">
    <property type="entry name" value="PRK01198.1-2"/>
    <property type="match status" value="1"/>
</dbReference>
<dbReference type="PANTHER" id="PTHR38682">
    <property type="entry name" value="V-TYPE ATP SYNTHASE SUBUNIT C"/>
    <property type="match status" value="1"/>
</dbReference>
<dbReference type="PANTHER" id="PTHR38682:SF1">
    <property type="entry name" value="V-TYPE ATP SYNTHASE SUBUNIT C"/>
    <property type="match status" value="1"/>
</dbReference>
<dbReference type="Pfam" id="PF01992">
    <property type="entry name" value="vATP-synt_AC39"/>
    <property type="match status" value="1"/>
</dbReference>
<dbReference type="SUPFAM" id="SSF103486">
    <property type="entry name" value="V-type ATP synthase subunit C"/>
    <property type="match status" value="1"/>
</dbReference>
<feature type="chain" id="PRO_0000119373" description="A-type ATP synthase subunit C">
    <location>
        <begin position="1"/>
        <end position="356"/>
    </location>
</feature>
<name>AATC_THEAC</name>
<keyword id="KW-0066">ATP synthesis</keyword>
<keyword id="KW-1003">Cell membrane</keyword>
<keyword id="KW-0375">Hydrogen ion transport</keyword>
<keyword id="KW-0406">Ion transport</keyword>
<keyword id="KW-0472">Membrane</keyword>
<keyword id="KW-1185">Reference proteome</keyword>
<keyword id="KW-0813">Transport</keyword>
<accession>Q9HM67</accession>
<protein>
    <recommendedName>
        <fullName evidence="1">A-type ATP synthase subunit C</fullName>
    </recommendedName>
</protein>
<organism>
    <name type="scientific">Thermoplasma acidophilum (strain ATCC 25905 / DSM 1728 / JCM 9062 / NBRC 15155 / AMRC-C165)</name>
    <dbReference type="NCBI Taxonomy" id="273075"/>
    <lineage>
        <taxon>Archaea</taxon>
        <taxon>Methanobacteriati</taxon>
        <taxon>Thermoplasmatota</taxon>
        <taxon>Thermoplasmata</taxon>
        <taxon>Thermoplasmatales</taxon>
        <taxon>Thermoplasmataceae</taxon>
        <taxon>Thermoplasma</taxon>
    </lineage>
</organism>